<feature type="chain" id="PRO_0000206671" description="PKHD-type hydroxylase BB1978">
    <location>
        <begin position="1"/>
        <end position="226"/>
    </location>
</feature>
<feature type="domain" description="Fe2OG dioxygenase" evidence="1">
    <location>
        <begin position="78"/>
        <end position="178"/>
    </location>
</feature>
<feature type="binding site" evidence="1">
    <location>
        <position position="96"/>
    </location>
    <ligand>
        <name>Fe cation</name>
        <dbReference type="ChEBI" id="CHEBI:24875"/>
    </ligand>
</feature>
<feature type="binding site" evidence="1">
    <location>
        <position position="98"/>
    </location>
    <ligand>
        <name>Fe cation</name>
        <dbReference type="ChEBI" id="CHEBI:24875"/>
    </ligand>
</feature>
<feature type="binding site" evidence="1">
    <location>
        <position position="159"/>
    </location>
    <ligand>
        <name>Fe cation</name>
        <dbReference type="ChEBI" id="CHEBI:24875"/>
    </ligand>
</feature>
<feature type="binding site" evidence="1">
    <location>
        <position position="169"/>
    </location>
    <ligand>
        <name>2-oxoglutarate</name>
        <dbReference type="ChEBI" id="CHEBI:16810"/>
    </ligand>
</feature>
<sequence length="226" mass="25134">MLIQIADLFTPAEAAQIRARLEAADWVDGKVTAGYQSAQVKHNRQLSEQHPLAQELGGLILQRLAANNLFMSAALPRKIFPPLFNRYEGGEAFGYHVDNALRPVPGTAERVRTDLSATLFFSEPDSYDGGELVVDDTYGPRTVKLPAGHMVLYPGTSLHKVTPVTRGARISAFFWLQSLVREDSQRSLLLEMDVAIQRLNQDTPGHASIVQLTGVYHNLLRRWTDV</sequence>
<name>Y1978_BORBR</name>
<protein>
    <recommendedName>
        <fullName evidence="1">PKHD-type hydroxylase BB1978</fullName>
        <ecNumber evidence="1">1.14.11.-</ecNumber>
    </recommendedName>
</protein>
<evidence type="ECO:0000255" key="1">
    <source>
        <dbReference type="HAMAP-Rule" id="MF_00657"/>
    </source>
</evidence>
<keyword id="KW-0223">Dioxygenase</keyword>
<keyword id="KW-0408">Iron</keyword>
<keyword id="KW-0479">Metal-binding</keyword>
<keyword id="KW-0560">Oxidoreductase</keyword>
<keyword id="KW-0847">Vitamin C</keyword>
<reference key="1">
    <citation type="journal article" date="2000" name="Infect. Immun.">
        <title>Bordetella pertussis TonB, a Bvg-independent virulence determinant.</title>
        <authorList>
            <person name="Pradel E."/>
            <person name="Guiso N."/>
            <person name="Menozzi F.D."/>
            <person name="Locht C."/>
        </authorList>
    </citation>
    <scope>NUCLEOTIDE SEQUENCE [GENOMIC DNA]</scope>
    <source>
        <strain>BB1015</strain>
    </source>
</reference>
<reference key="2">
    <citation type="journal article" date="2003" name="Nat. Genet.">
        <title>Comparative analysis of the genome sequences of Bordetella pertussis, Bordetella parapertussis and Bordetella bronchiseptica.</title>
        <authorList>
            <person name="Parkhill J."/>
            <person name="Sebaihia M."/>
            <person name="Preston A."/>
            <person name="Murphy L.D."/>
            <person name="Thomson N.R."/>
            <person name="Harris D.E."/>
            <person name="Holden M.T.G."/>
            <person name="Churcher C.M."/>
            <person name="Bentley S.D."/>
            <person name="Mungall K.L."/>
            <person name="Cerdeno-Tarraga A.-M."/>
            <person name="Temple L."/>
            <person name="James K.D."/>
            <person name="Harris B."/>
            <person name="Quail M.A."/>
            <person name="Achtman M."/>
            <person name="Atkin R."/>
            <person name="Baker S."/>
            <person name="Basham D."/>
            <person name="Bason N."/>
            <person name="Cherevach I."/>
            <person name="Chillingworth T."/>
            <person name="Collins M."/>
            <person name="Cronin A."/>
            <person name="Davis P."/>
            <person name="Doggett J."/>
            <person name="Feltwell T."/>
            <person name="Goble A."/>
            <person name="Hamlin N."/>
            <person name="Hauser H."/>
            <person name="Holroyd S."/>
            <person name="Jagels K."/>
            <person name="Leather S."/>
            <person name="Moule S."/>
            <person name="Norberczak H."/>
            <person name="O'Neil S."/>
            <person name="Ormond D."/>
            <person name="Price C."/>
            <person name="Rabbinowitsch E."/>
            <person name="Rutter S."/>
            <person name="Sanders M."/>
            <person name="Saunders D."/>
            <person name="Seeger K."/>
            <person name="Sharp S."/>
            <person name="Simmonds M."/>
            <person name="Skelton J."/>
            <person name="Squares R."/>
            <person name="Squares S."/>
            <person name="Stevens K."/>
            <person name="Unwin L."/>
            <person name="Whitehead S."/>
            <person name="Barrell B.G."/>
            <person name="Maskell D.J."/>
        </authorList>
    </citation>
    <scope>NUCLEOTIDE SEQUENCE [LARGE SCALE GENOMIC DNA]</scope>
    <source>
        <strain>ATCC BAA-588 / NCTC 13252 / RB50</strain>
    </source>
</reference>
<comment type="cofactor">
    <cofactor evidence="1">
        <name>Fe(2+)</name>
        <dbReference type="ChEBI" id="CHEBI:29033"/>
    </cofactor>
    <text evidence="1">Binds 1 Fe(2+) ion per subunit.</text>
</comment>
<comment type="cofactor">
    <cofactor evidence="1">
        <name>L-ascorbate</name>
        <dbReference type="ChEBI" id="CHEBI:38290"/>
    </cofactor>
</comment>
<gene>
    <name type="ordered locus">BB1978</name>
</gene>
<proteinExistence type="inferred from homology"/>
<dbReference type="EC" id="1.14.11.-" evidence="1"/>
<dbReference type="EMBL" id="AJ132742">
    <property type="protein sequence ID" value="CAB53379.1"/>
    <property type="molecule type" value="Genomic_DNA"/>
</dbReference>
<dbReference type="EMBL" id="BX640443">
    <property type="protein sequence ID" value="CAE32475.1"/>
    <property type="molecule type" value="Genomic_DNA"/>
</dbReference>
<dbReference type="RefSeq" id="WP_003812970.1">
    <property type="nucleotide sequence ID" value="NC_002927.3"/>
</dbReference>
<dbReference type="SMR" id="P0A3X3"/>
<dbReference type="DNASU" id="2661621"/>
<dbReference type="KEGG" id="bbr:BB1978"/>
<dbReference type="eggNOG" id="COG3128">
    <property type="taxonomic scope" value="Bacteria"/>
</dbReference>
<dbReference type="HOGENOM" id="CLU_106663_0_0_4"/>
<dbReference type="Proteomes" id="UP000001027">
    <property type="component" value="Chromosome"/>
</dbReference>
<dbReference type="GO" id="GO:0016706">
    <property type="term" value="F:2-oxoglutarate-dependent dioxygenase activity"/>
    <property type="evidence" value="ECO:0007669"/>
    <property type="project" value="UniProtKB-UniRule"/>
</dbReference>
<dbReference type="GO" id="GO:0005506">
    <property type="term" value="F:iron ion binding"/>
    <property type="evidence" value="ECO:0007669"/>
    <property type="project" value="UniProtKB-UniRule"/>
</dbReference>
<dbReference type="GO" id="GO:0031418">
    <property type="term" value="F:L-ascorbic acid binding"/>
    <property type="evidence" value="ECO:0007669"/>
    <property type="project" value="UniProtKB-KW"/>
</dbReference>
<dbReference type="GO" id="GO:0006974">
    <property type="term" value="P:DNA damage response"/>
    <property type="evidence" value="ECO:0007669"/>
    <property type="project" value="TreeGrafter"/>
</dbReference>
<dbReference type="GO" id="GO:0006879">
    <property type="term" value="P:intracellular iron ion homeostasis"/>
    <property type="evidence" value="ECO:0007669"/>
    <property type="project" value="TreeGrafter"/>
</dbReference>
<dbReference type="Gene3D" id="2.60.120.620">
    <property type="entry name" value="q2cbj1_9rhob like domain"/>
    <property type="match status" value="1"/>
</dbReference>
<dbReference type="Gene3D" id="4.10.860.20">
    <property type="entry name" value="Rabenosyn, Rab binding domain"/>
    <property type="match status" value="1"/>
</dbReference>
<dbReference type="HAMAP" id="MF_00657">
    <property type="entry name" value="Hydroxyl_YbiX"/>
    <property type="match status" value="1"/>
</dbReference>
<dbReference type="InterPro" id="IPR005123">
    <property type="entry name" value="Oxoglu/Fe-dep_dioxygenase_dom"/>
</dbReference>
<dbReference type="InterPro" id="IPR041097">
    <property type="entry name" value="PKHD_C"/>
</dbReference>
<dbReference type="InterPro" id="IPR023550">
    <property type="entry name" value="PKHD_hydroxylase"/>
</dbReference>
<dbReference type="InterPro" id="IPR006620">
    <property type="entry name" value="Pro_4_hyd_alph"/>
</dbReference>
<dbReference type="InterPro" id="IPR044862">
    <property type="entry name" value="Pro_4_hyd_alph_FE2OG_OXY"/>
</dbReference>
<dbReference type="NCBIfam" id="NF003974">
    <property type="entry name" value="PRK05467.1-3"/>
    <property type="match status" value="1"/>
</dbReference>
<dbReference type="NCBIfam" id="NF003975">
    <property type="entry name" value="PRK05467.1-4"/>
    <property type="match status" value="1"/>
</dbReference>
<dbReference type="PANTHER" id="PTHR41536">
    <property type="entry name" value="PKHD-TYPE HYDROXYLASE YBIX"/>
    <property type="match status" value="1"/>
</dbReference>
<dbReference type="PANTHER" id="PTHR41536:SF1">
    <property type="entry name" value="PKHD-TYPE HYDROXYLASE YBIX"/>
    <property type="match status" value="1"/>
</dbReference>
<dbReference type="Pfam" id="PF13640">
    <property type="entry name" value="2OG-FeII_Oxy_3"/>
    <property type="match status" value="1"/>
</dbReference>
<dbReference type="Pfam" id="PF18331">
    <property type="entry name" value="PKHD_C"/>
    <property type="match status" value="1"/>
</dbReference>
<dbReference type="SMART" id="SM00702">
    <property type="entry name" value="P4Hc"/>
    <property type="match status" value="1"/>
</dbReference>
<dbReference type="PROSITE" id="PS51471">
    <property type="entry name" value="FE2OG_OXY"/>
    <property type="match status" value="1"/>
</dbReference>
<organism>
    <name type="scientific">Bordetella bronchiseptica (strain ATCC BAA-588 / NCTC 13252 / RB50)</name>
    <name type="common">Alcaligenes bronchisepticus</name>
    <dbReference type="NCBI Taxonomy" id="257310"/>
    <lineage>
        <taxon>Bacteria</taxon>
        <taxon>Pseudomonadati</taxon>
        <taxon>Pseudomonadota</taxon>
        <taxon>Betaproteobacteria</taxon>
        <taxon>Burkholderiales</taxon>
        <taxon>Alcaligenaceae</taxon>
        <taxon>Bordetella</taxon>
    </lineage>
</organism>
<accession>P0A3X3</accession>
<accession>Q9S3N8</accession>